<accession>Q6FNJ6</accession>
<dbReference type="EMBL" id="CR380956">
    <property type="protein sequence ID" value="CAG61149.1"/>
    <property type="molecule type" value="Genomic_DNA"/>
</dbReference>
<dbReference type="RefSeq" id="XP_448198.1">
    <property type="nucleotide sequence ID" value="XM_448198.1"/>
</dbReference>
<dbReference type="SMR" id="Q6FNJ6"/>
<dbReference type="STRING" id="284593.Q6FNJ6"/>
<dbReference type="GlyCosmos" id="Q6FNJ6">
    <property type="glycosylation" value="10 sites, No reported glycans"/>
</dbReference>
<dbReference type="EnsemblFungi" id="CAGL0J11176g-T">
    <property type="protein sequence ID" value="CAGL0J11176g-T-p1"/>
    <property type="gene ID" value="CAGL0J11176g"/>
</dbReference>
<dbReference type="KEGG" id="cgr:2889488"/>
<dbReference type="CGD" id="CAL0133688">
    <property type="gene designation" value="CAGL0J11176g"/>
</dbReference>
<dbReference type="VEuPathDB" id="FungiDB:CAGL0J11176g"/>
<dbReference type="eggNOG" id="ENOG502S5S1">
    <property type="taxonomic scope" value="Eukaryota"/>
</dbReference>
<dbReference type="HOGENOM" id="CLU_029057_0_0_1"/>
<dbReference type="InParanoid" id="Q6FNJ6"/>
<dbReference type="OMA" id="FYQHWLD"/>
<dbReference type="Proteomes" id="UP000002428">
    <property type="component" value="Chromosome J"/>
</dbReference>
<dbReference type="GO" id="GO:0062040">
    <property type="term" value="C:fungal biofilm matrix"/>
    <property type="evidence" value="ECO:0000314"/>
    <property type="project" value="CGD"/>
</dbReference>
<dbReference type="GO" id="GO:0005774">
    <property type="term" value="C:vacuolar membrane"/>
    <property type="evidence" value="ECO:0007669"/>
    <property type="project" value="UniProtKB-SubCell"/>
</dbReference>
<organism>
    <name type="scientific">Candida glabrata (strain ATCC 2001 / BCRC 20586 / JCM 3761 / NBRC 0622 / NRRL Y-65 / CBS 138)</name>
    <name type="common">Yeast</name>
    <name type="synonym">Nakaseomyces glabratus</name>
    <dbReference type="NCBI Taxonomy" id="284593"/>
    <lineage>
        <taxon>Eukaryota</taxon>
        <taxon>Fungi</taxon>
        <taxon>Dikarya</taxon>
        <taxon>Ascomycota</taxon>
        <taxon>Saccharomycotina</taxon>
        <taxon>Saccharomycetes</taxon>
        <taxon>Saccharomycetales</taxon>
        <taxon>Saccharomycetaceae</taxon>
        <taxon>Nakaseomyces</taxon>
    </lineage>
</organism>
<proteinExistence type="inferred from homology"/>
<gene>
    <name type="primary">TDA7</name>
    <name type="ordered locus">CAGL0J11176g</name>
</gene>
<comment type="subcellular location">
    <subcellularLocation>
        <location evidence="1">Vacuole membrane</location>
        <topology evidence="1">Single-pass membrane protein</topology>
    </subcellularLocation>
</comment>
<comment type="similarity">
    <text evidence="4">Belongs to the TDA7 family.</text>
</comment>
<protein>
    <recommendedName>
        <fullName>Topoisomerase I damage affected protein 7</fullName>
    </recommendedName>
</protein>
<reference key="1">
    <citation type="journal article" date="2004" name="Nature">
        <title>Genome evolution in yeasts.</title>
        <authorList>
            <person name="Dujon B."/>
            <person name="Sherman D."/>
            <person name="Fischer G."/>
            <person name="Durrens P."/>
            <person name="Casaregola S."/>
            <person name="Lafontaine I."/>
            <person name="de Montigny J."/>
            <person name="Marck C."/>
            <person name="Neuveglise C."/>
            <person name="Talla E."/>
            <person name="Goffard N."/>
            <person name="Frangeul L."/>
            <person name="Aigle M."/>
            <person name="Anthouard V."/>
            <person name="Babour A."/>
            <person name="Barbe V."/>
            <person name="Barnay S."/>
            <person name="Blanchin S."/>
            <person name="Beckerich J.-M."/>
            <person name="Beyne E."/>
            <person name="Bleykasten C."/>
            <person name="Boisrame A."/>
            <person name="Boyer J."/>
            <person name="Cattolico L."/>
            <person name="Confanioleri F."/>
            <person name="de Daruvar A."/>
            <person name="Despons L."/>
            <person name="Fabre E."/>
            <person name="Fairhead C."/>
            <person name="Ferry-Dumazet H."/>
            <person name="Groppi A."/>
            <person name="Hantraye F."/>
            <person name="Hennequin C."/>
            <person name="Jauniaux N."/>
            <person name="Joyet P."/>
            <person name="Kachouri R."/>
            <person name="Kerrest A."/>
            <person name="Koszul R."/>
            <person name="Lemaire M."/>
            <person name="Lesur I."/>
            <person name="Ma L."/>
            <person name="Muller H."/>
            <person name="Nicaud J.-M."/>
            <person name="Nikolski M."/>
            <person name="Oztas S."/>
            <person name="Ozier-Kalogeropoulos O."/>
            <person name="Pellenz S."/>
            <person name="Potier S."/>
            <person name="Richard G.-F."/>
            <person name="Straub M.-L."/>
            <person name="Suleau A."/>
            <person name="Swennen D."/>
            <person name="Tekaia F."/>
            <person name="Wesolowski-Louvel M."/>
            <person name="Westhof E."/>
            <person name="Wirth B."/>
            <person name="Zeniou-Meyer M."/>
            <person name="Zivanovic Y."/>
            <person name="Bolotin-Fukuhara M."/>
            <person name="Thierry A."/>
            <person name="Bouchier C."/>
            <person name="Caudron B."/>
            <person name="Scarpelli C."/>
            <person name="Gaillardin C."/>
            <person name="Weissenbach J."/>
            <person name="Wincker P."/>
            <person name="Souciet J.-L."/>
        </authorList>
    </citation>
    <scope>NUCLEOTIDE SEQUENCE [LARGE SCALE GENOMIC DNA]</scope>
    <source>
        <strain>ATCC 2001 / BCRC 20586 / JCM 3761 / NBRC 0622 / NRRL Y-65 / CBS 138</strain>
    </source>
</reference>
<evidence type="ECO:0000250" key="1"/>
<evidence type="ECO:0000255" key="2"/>
<evidence type="ECO:0000256" key="3">
    <source>
        <dbReference type="SAM" id="MobiDB-lite"/>
    </source>
</evidence>
<evidence type="ECO:0000305" key="4"/>
<feature type="chain" id="PRO_0000410745" description="Topoisomerase I damage affected protein 7">
    <location>
        <begin position="1"/>
        <end position="629"/>
    </location>
</feature>
<feature type="transmembrane region" description="Helical" evidence="2">
    <location>
        <begin position="489"/>
        <end position="509"/>
    </location>
</feature>
<feature type="region of interest" description="Disordered" evidence="3">
    <location>
        <begin position="365"/>
        <end position="384"/>
    </location>
</feature>
<feature type="region of interest" description="Disordered" evidence="3">
    <location>
        <begin position="529"/>
        <end position="572"/>
    </location>
</feature>
<feature type="region of interest" description="Disordered" evidence="3">
    <location>
        <begin position="591"/>
        <end position="618"/>
    </location>
</feature>
<feature type="compositionally biased region" description="Low complexity" evidence="3">
    <location>
        <begin position="533"/>
        <end position="543"/>
    </location>
</feature>
<feature type="glycosylation site" description="N-linked (GlcNAc...) asparagine" evidence="2">
    <location>
        <position position="4"/>
    </location>
</feature>
<feature type="glycosylation site" description="N-linked (GlcNAc...) asparagine" evidence="2">
    <location>
        <position position="70"/>
    </location>
</feature>
<feature type="glycosylation site" description="N-linked (GlcNAc...) asparagine" evidence="2">
    <location>
        <position position="203"/>
    </location>
</feature>
<feature type="glycosylation site" description="N-linked (GlcNAc...) asparagine" evidence="2">
    <location>
        <position position="242"/>
    </location>
</feature>
<feature type="glycosylation site" description="N-linked (GlcNAc...) asparagine" evidence="2">
    <location>
        <position position="249"/>
    </location>
</feature>
<feature type="glycosylation site" description="N-linked (GlcNAc...) asparagine" evidence="2">
    <location>
        <position position="282"/>
    </location>
</feature>
<feature type="glycosylation site" description="N-linked (GlcNAc...) asparagine" evidence="2">
    <location>
        <position position="315"/>
    </location>
</feature>
<feature type="glycosylation site" description="N-linked (GlcNAc...) asparagine" evidence="2">
    <location>
        <position position="333"/>
    </location>
</feature>
<feature type="glycosylation site" description="N-linked (GlcNAc...) asparagine" evidence="2">
    <location>
        <position position="375"/>
    </location>
</feature>
<feature type="glycosylation site" description="N-linked (GlcNAc...) asparagine" evidence="2">
    <location>
        <position position="478"/>
    </location>
</feature>
<keyword id="KW-0325">Glycoprotein</keyword>
<keyword id="KW-0472">Membrane</keyword>
<keyword id="KW-1185">Reference proteome</keyword>
<keyword id="KW-0812">Transmembrane</keyword>
<keyword id="KW-1133">Transmembrane helix</keyword>
<keyword id="KW-0926">Vacuole</keyword>
<sequence length="629" mass="67352">MIHNSSYTEAADIKSLSSFIEESSRVPDYISESNNIGWSSNINNPPLFESSSFDITTQNDNWILTETMQNITTESSSTFSRSVASSVFPSSSQAFVSPPSIIDIPISSIPESSSISISSDVLSSAITVSQTSSSSYSSLISSYSTIQSTSSSSISENEISSSSRISPGLLSSVPSITTSFSSGISSSVSPTSSLQQIAEQSSNSSLAENDLLSSSLTILSSVLSSSVLLHNSGVSSSSFTDNFSSTLTNSSNSLAILSSISESSLINTITDLPSSSVLLSPNNSESSIKVSSASSSSSRRKASTYTTPSRIPFSNSSEWYTPLPTPSISSSTNDTSSLLSELALIGISSSSSSSSSSQFYTSSTSSSSLVSSSENYSSSQPTTIEPITSTISSSYSDLSNDGEILSSTLGKSVYYSYIQTFDITASTTTFETALPIVTAFNLKDSYTFSKPSSIITTDLHFYKDWLSGALDSNEENGNKSKNAGTIAGSVVGSVVGLLVCTLIVWYFYIRKRRRNQKWKSFEVPSRSKDVEYNNNDNPFNNEFDFQHRVPPPLPPQRKNHNSIGVPPSSMGLSNTRSADYHMRFSYISSSTDSSDDYSDSMQSALHIGSDSGRERSNDVPEMGYLREII</sequence>
<name>TDA7_CANGA</name>